<proteinExistence type="evidence at protein level"/>
<evidence type="ECO:0000305" key="1"/>
<protein>
    <recommendedName>
        <fullName>Oxygen-evolving enhancer protein 2</fullName>
        <shortName>OEE2</shortName>
    </recommendedName>
    <alternativeName>
        <fullName>24 kDa subunit of oxygen evolving system of photosystem II</fullName>
    </alternativeName>
</protein>
<sequence length="12" mass="1182">AYGESANVFGAP</sequence>
<reference key="1">
    <citation type="journal article" date="1997" name="Planta">
        <title>Cytokinin affects nuclear- and plastome-encoded energy-converting plastid enzymes.</title>
        <authorList>
            <person name="Kasten B."/>
            <person name="Buck F."/>
            <person name="Nuske J."/>
            <person name="Reski R."/>
        </authorList>
    </citation>
    <scope>PROTEIN SEQUENCE</scope>
    <source>
        <tissue>Protonema</tissue>
    </source>
</reference>
<accession>P80662</accession>
<feature type="chain" id="PRO_0000220271" description="Oxygen-evolving enhancer protein 2">
    <location>
        <begin position="1"/>
        <end position="12" status="greater than"/>
    </location>
</feature>
<feature type="non-terminal residue">
    <location>
        <position position="12"/>
    </location>
</feature>
<comment type="function">
    <text>May be involved in the regulation of photosystem II.</text>
</comment>
<comment type="subcellular location">
    <subcellularLocation>
        <location>Plastid</location>
        <location>Chloroplast thylakoid membrane</location>
    </subcellularLocation>
    <text>Associated with the photosystem II complex.</text>
</comment>
<comment type="induction">
    <text>By light.</text>
</comment>
<comment type="similarity">
    <text evidence="1">Belongs to the PsbP family.</text>
</comment>
<dbReference type="InParanoid" id="P80662"/>
<dbReference type="Proteomes" id="UP000006727">
    <property type="component" value="Unplaced"/>
</dbReference>
<dbReference type="GO" id="GO:0009535">
    <property type="term" value="C:chloroplast thylakoid membrane"/>
    <property type="evidence" value="ECO:0007669"/>
    <property type="project" value="UniProtKB-SubCell"/>
</dbReference>
<dbReference type="GO" id="GO:0009523">
    <property type="term" value="C:photosystem II"/>
    <property type="evidence" value="ECO:0007669"/>
    <property type="project" value="UniProtKB-KW"/>
</dbReference>
<dbReference type="GO" id="GO:0015979">
    <property type="term" value="P:photosynthesis"/>
    <property type="evidence" value="ECO:0007669"/>
    <property type="project" value="UniProtKB-KW"/>
</dbReference>
<organism>
    <name type="scientific">Physcomitrium patens</name>
    <name type="common">Spreading-leaved earth moss</name>
    <name type="synonym">Physcomitrella patens</name>
    <dbReference type="NCBI Taxonomy" id="3218"/>
    <lineage>
        <taxon>Eukaryota</taxon>
        <taxon>Viridiplantae</taxon>
        <taxon>Streptophyta</taxon>
        <taxon>Embryophyta</taxon>
        <taxon>Bryophyta</taxon>
        <taxon>Bryophytina</taxon>
        <taxon>Bryopsida</taxon>
        <taxon>Funariidae</taxon>
        <taxon>Funariales</taxon>
        <taxon>Funariaceae</taxon>
        <taxon>Physcomitrium</taxon>
    </lineage>
</organism>
<keyword id="KW-0150">Chloroplast</keyword>
<keyword id="KW-0903">Direct protein sequencing</keyword>
<keyword id="KW-0472">Membrane</keyword>
<keyword id="KW-0602">Photosynthesis</keyword>
<keyword id="KW-0604">Photosystem II</keyword>
<keyword id="KW-0934">Plastid</keyword>
<keyword id="KW-1185">Reference proteome</keyword>
<keyword id="KW-0793">Thylakoid</keyword>
<name>PSBP3_PHYPA</name>